<feature type="chain" id="PRO_0000146144" description="Large ribosomal subunit protein eL30">
    <location>
        <begin position="1"/>
        <end position="100"/>
    </location>
</feature>
<sequence length="100" mass="10934">MSVEKALKDLVKTGVYAMGFKQSLKAVKAGEAKAIVIAENTPPELRRKLEYYAKLAGIPIIVYRGTRMDMGLVMGRRHGVSVLAVIDEGSSRILEQAEEA</sequence>
<reference key="1">
    <citation type="journal article" date="1999" name="DNA Res.">
        <title>Complete genome sequence of an aerobic hyper-thermophilic crenarchaeon, Aeropyrum pernix K1.</title>
        <authorList>
            <person name="Kawarabayasi Y."/>
            <person name="Hino Y."/>
            <person name="Horikawa H."/>
            <person name="Yamazaki S."/>
            <person name="Haikawa Y."/>
            <person name="Jin-no K."/>
            <person name="Takahashi M."/>
            <person name="Sekine M."/>
            <person name="Baba S."/>
            <person name="Ankai A."/>
            <person name="Kosugi H."/>
            <person name="Hosoyama A."/>
            <person name="Fukui S."/>
            <person name="Nagai Y."/>
            <person name="Nishijima K."/>
            <person name="Nakazawa H."/>
            <person name="Takamiya M."/>
            <person name="Masuda S."/>
            <person name="Funahashi T."/>
            <person name="Tanaka T."/>
            <person name="Kudoh Y."/>
            <person name="Yamazaki J."/>
            <person name="Kushida N."/>
            <person name="Oguchi A."/>
            <person name="Aoki K."/>
            <person name="Kubota K."/>
            <person name="Nakamura Y."/>
            <person name="Nomura N."/>
            <person name="Sako Y."/>
            <person name="Kikuchi H."/>
        </authorList>
    </citation>
    <scope>NUCLEOTIDE SEQUENCE [LARGE SCALE GENOMIC DNA]</scope>
    <source>
        <strain>ATCC 700893 / DSM 11879 / JCM 9820 / NBRC 100138 / K1</strain>
    </source>
</reference>
<organism>
    <name type="scientific">Aeropyrum pernix (strain ATCC 700893 / DSM 11879 / JCM 9820 / NBRC 100138 / K1)</name>
    <dbReference type="NCBI Taxonomy" id="272557"/>
    <lineage>
        <taxon>Archaea</taxon>
        <taxon>Thermoproteota</taxon>
        <taxon>Thermoprotei</taxon>
        <taxon>Desulfurococcales</taxon>
        <taxon>Desulfurococcaceae</taxon>
        <taxon>Aeropyrum</taxon>
    </lineage>
</organism>
<comment type="similarity">
    <text evidence="1">Belongs to the eukaryotic ribosomal protein eL30 family.</text>
</comment>
<gene>
    <name type="primary">rpl30e</name>
    <name type="ordered locus">APE_1851.1</name>
</gene>
<proteinExistence type="inferred from homology"/>
<accession>Q9YAU3</accession>
<dbReference type="EMBL" id="BA000002">
    <property type="protein sequence ID" value="BAA80855.2"/>
    <property type="molecule type" value="Genomic_DNA"/>
</dbReference>
<dbReference type="PIR" id="B72571">
    <property type="entry name" value="B72571"/>
</dbReference>
<dbReference type="SMR" id="Q9YAU3"/>
<dbReference type="STRING" id="272557.APE_1851.1"/>
<dbReference type="EnsemblBacteria" id="BAA80855">
    <property type="protein sequence ID" value="BAA80855"/>
    <property type="gene ID" value="APE_1851.1"/>
</dbReference>
<dbReference type="KEGG" id="ape:APE_1851.1"/>
<dbReference type="PATRIC" id="fig|272557.25.peg.1242"/>
<dbReference type="eggNOG" id="arCOG01752">
    <property type="taxonomic scope" value="Archaea"/>
</dbReference>
<dbReference type="Proteomes" id="UP000002518">
    <property type="component" value="Chromosome"/>
</dbReference>
<dbReference type="GO" id="GO:0022625">
    <property type="term" value="C:cytosolic large ribosomal subunit"/>
    <property type="evidence" value="ECO:0007669"/>
    <property type="project" value="InterPro"/>
</dbReference>
<dbReference type="GO" id="GO:0003723">
    <property type="term" value="F:RNA binding"/>
    <property type="evidence" value="ECO:0007669"/>
    <property type="project" value="InterPro"/>
</dbReference>
<dbReference type="GO" id="GO:0003735">
    <property type="term" value="F:structural constituent of ribosome"/>
    <property type="evidence" value="ECO:0007669"/>
    <property type="project" value="InterPro"/>
</dbReference>
<dbReference type="GO" id="GO:0006412">
    <property type="term" value="P:translation"/>
    <property type="evidence" value="ECO:0007669"/>
    <property type="project" value="UniProtKB-UniRule"/>
</dbReference>
<dbReference type="Gene3D" id="3.30.1330.30">
    <property type="match status" value="1"/>
</dbReference>
<dbReference type="HAMAP" id="MF_00481">
    <property type="entry name" value="Ribosomal_eL30"/>
    <property type="match status" value="1"/>
</dbReference>
<dbReference type="InterPro" id="IPR000231">
    <property type="entry name" value="Ribosomal_eL30"/>
</dbReference>
<dbReference type="InterPro" id="IPR039109">
    <property type="entry name" value="Ribosomal_eL30-like"/>
</dbReference>
<dbReference type="InterPro" id="IPR029064">
    <property type="entry name" value="Ribosomal_eL30-like_sf"/>
</dbReference>
<dbReference type="InterPro" id="IPR022991">
    <property type="entry name" value="Ribosomal_eL30_CS"/>
</dbReference>
<dbReference type="InterPro" id="IPR004038">
    <property type="entry name" value="Ribosomal_eL8/eL30/eS12/Gad45"/>
</dbReference>
<dbReference type="NCBIfam" id="NF002172">
    <property type="entry name" value="PRK01018.1"/>
    <property type="match status" value="1"/>
</dbReference>
<dbReference type="PANTHER" id="PTHR11449">
    <property type="entry name" value="RIBOSOMAL PROTEIN L30"/>
    <property type="match status" value="1"/>
</dbReference>
<dbReference type="Pfam" id="PF01248">
    <property type="entry name" value="Ribosomal_L7Ae"/>
    <property type="match status" value="1"/>
</dbReference>
<dbReference type="PRINTS" id="PR00884">
    <property type="entry name" value="RIBOSOMALHS6"/>
</dbReference>
<dbReference type="SUPFAM" id="SSF55315">
    <property type="entry name" value="L30e-like"/>
    <property type="match status" value="1"/>
</dbReference>
<dbReference type="PROSITE" id="PS00709">
    <property type="entry name" value="RIBOSOMAL_L30E_1"/>
    <property type="match status" value="1"/>
</dbReference>
<dbReference type="PROSITE" id="PS00993">
    <property type="entry name" value="RIBOSOMAL_L30E_2"/>
    <property type="match status" value="1"/>
</dbReference>
<evidence type="ECO:0000305" key="1"/>
<keyword id="KW-1185">Reference proteome</keyword>
<keyword id="KW-0687">Ribonucleoprotein</keyword>
<keyword id="KW-0689">Ribosomal protein</keyword>
<name>RL30E_AERPE</name>
<protein>
    <recommendedName>
        <fullName evidence="1">Large ribosomal subunit protein eL30</fullName>
    </recommendedName>
    <alternativeName>
        <fullName>50S ribosomal protein L30e</fullName>
    </alternativeName>
</protein>